<sequence length="436" mass="48312">MQVSVETTQGLERRLTITVPADKIEKEYNSRLNQVAKTRRIDGFRPGKAPKALIQKMYGESIVADVADAVMQRHFVEALVAEKLNPVGAPTLEPNQLVPGSDFTFTVSFEVYPEFKVQNLDAIKVEKPVATVSDADLDKMLTTLRKQHASWVDADEAAANDLRVNMDFVGSVDGEEFEGGKAEGFALVLGAGRMIPGFEAGILGKKAGESFDIEVTFPEDYHAENLKGKAAKFAIKLNKVEKQDLPELDAEFIKRFGVEDGSVESLKAEIRKNMERELTQALKGQVKEQILSGLLEQNLIDVPKAAVTREVEALRQQALQRFGAANSKNVPQLPDELFQEQAERRVRVGLLLGEVIREQDIKADDARVKTLIESLATAYEDPSEVVDYYFQNERLLNNMRDLAVEDQAIEFLLSQAQVTEKATSFDEVINKAGAAA</sequence>
<protein>
    <recommendedName>
        <fullName evidence="1">Trigger factor</fullName>
        <shortName evidence="1">TF</shortName>
        <ecNumber evidence="1">5.2.1.8</ecNumber>
    </recommendedName>
    <alternativeName>
        <fullName evidence="1">PPIase</fullName>
    </alternativeName>
</protein>
<gene>
    <name evidence="1" type="primary">tig</name>
    <name type="ordered locus">Tola_1082</name>
</gene>
<keyword id="KW-0131">Cell cycle</keyword>
<keyword id="KW-0132">Cell division</keyword>
<keyword id="KW-0143">Chaperone</keyword>
<keyword id="KW-0963">Cytoplasm</keyword>
<keyword id="KW-0413">Isomerase</keyword>
<keyword id="KW-1185">Reference proteome</keyword>
<keyword id="KW-0697">Rotamase</keyword>
<name>TIG_TOLAT</name>
<feature type="chain" id="PRO_1000205002" description="Trigger factor">
    <location>
        <begin position="1"/>
        <end position="436"/>
    </location>
</feature>
<feature type="domain" description="PPIase FKBP-type" evidence="1">
    <location>
        <begin position="161"/>
        <end position="246"/>
    </location>
</feature>
<accession>C4LDB2</accession>
<proteinExistence type="inferred from homology"/>
<comment type="function">
    <text evidence="1">Involved in protein export. Acts as a chaperone by maintaining the newly synthesized protein in an open conformation. Functions as a peptidyl-prolyl cis-trans isomerase.</text>
</comment>
<comment type="catalytic activity">
    <reaction evidence="1">
        <text>[protein]-peptidylproline (omega=180) = [protein]-peptidylproline (omega=0)</text>
        <dbReference type="Rhea" id="RHEA:16237"/>
        <dbReference type="Rhea" id="RHEA-COMP:10747"/>
        <dbReference type="Rhea" id="RHEA-COMP:10748"/>
        <dbReference type="ChEBI" id="CHEBI:83833"/>
        <dbReference type="ChEBI" id="CHEBI:83834"/>
        <dbReference type="EC" id="5.2.1.8"/>
    </reaction>
</comment>
<comment type="subcellular location">
    <subcellularLocation>
        <location>Cytoplasm</location>
    </subcellularLocation>
    <text evidence="1">About half TF is bound to the ribosome near the polypeptide exit tunnel while the other half is free in the cytoplasm.</text>
</comment>
<comment type="domain">
    <text evidence="1">Consists of 3 domains; the N-terminus binds the ribosome, the middle domain has PPIase activity, while the C-terminus has intrinsic chaperone activity on its own.</text>
</comment>
<comment type="similarity">
    <text evidence="1">Belongs to the FKBP-type PPIase family. Tig subfamily.</text>
</comment>
<dbReference type="EC" id="5.2.1.8" evidence="1"/>
<dbReference type="EMBL" id="CP001616">
    <property type="protein sequence ID" value="ACQ92708.1"/>
    <property type="molecule type" value="Genomic_DNA"/>
</dbReference>
<dbReference type="RefSeq" id="WP_012729307.1">
    <property type="nucleotide sequence ID" value="NC_012691.1"/>
</dbReference>
<dbReference type="SMR" id="C4LDB2"/>
<dbReference type="STRING" id="595494.Tola_1082"/>
<dbReference type="KEGG" id="tau:Tola_1082"/>
<dbReference type="eggNOG" id="COG0544">
    <property type="taxonomic scope" value="Bacteria"/>
</dbReference>
<dbReference type="HOGENOM" id="CLU_033058_2_0_6"/>
<dbReference type="OrthoDB" id="9767721at2"/>
<dbReference type="Proteomes" id="UP000009073">
    <property type="component" value="Chromosome"/>
</dbReference>
<dbReference type="GO" id="GO:0005737">
    <property type="term" value="C:cytoplasm"/>
    <property type="evidence" value="ECO:0007669"/>
    <property type="project" value="UniProtKB-SubCell"/>
</dbReference>
<dbReference type="GO" id="GO:0003755">
    <property type="term" value="F:peptidyl-prolyl cis-trans isomerase activity"/>
    <property type="evidence" value="ECO:0007669"/>
    <property type="project" value="UniProtKB-UniRule"/>
</dbReference>
<dbReference type="GO" id="GO:0044183">
    <property type="term" value="F:protein folding chaperone"/>
    <property type="evidence" value="ECO:0007669"/>
    <property type="project" value="TreeGrafter"/>
</dbReference>
<dbReference type="GO" id="GO:0043022">
    <property type="term" value="F:ribosome binding"/>
    <property type="evidence" value="ECO:0007669"/>
    <property type="project" value="TreeGrafter"/>
</dbReference>
<dbReference type="GO" id="GO:0051083">
    <property type="term" value="P:'de novo' cotranslational protein folding"/>
    <property type="evidence" value="ECO:0007669"/>
    <property type="project" value="TreeGrafter"/>
</dbReference>
<dbReference type="GO" id="GO:0051301">
    <property type="term" value="P:cell division"/>
    <property type="evidence" value="ECO:0007669"/>
    <property type="project" value="UniProtKB-KW"/>
</dbReference>
<dbReference type="GO" id="GO:0061077">
    <property type="term" value="P:chaperone-mediated protein folding"/>
    <property type="evidence" value="ECO:0007669"/>
    <property type="project" value="TreeGrafter"/>
</dbReference>
<dbReference type="GO" id="GO:0015031">
    <property type="term" value="P:protein transport"/>
    <property type="evidence" value="ECO:0007669"/>
    <property type="project" value="UniProtKB-UniRule"/>
</dbReference>
<dbReference type="GO" id="GO:0043335">
    <property type="term" value="P:protein unfolding"/>
    <property type="evidence" value="ECO:0007669"/>
    <property type="project" value="TreeGrafter"/>
</dbReference>
<dbReference type="FunFam" id="3.10.50.40:FF:000001">
    <property type="entry name" value="Trigger factor"/>
    <property type="match status" value="1"/>
</dbReference>
<dbReference type="Gene3D" id="3.10.50.40">
    <property type="match status" value="1"/>
</dbReference>
<dbReference type="Gene3D" id="3.30.70.1050">
    <property type="entry name" value="Trigger factor ribosome-binding domain"/>
    <property type="match status" value="1"/>
</dbReference>
<dbReference type="Gene3D" id="1.10.3120.10">
    <property type="entry name" value="Trigger factor, C-terminal domain"/>
    <property type="match status" value="1"/>
</dbReference>
<dbReference type="HAMAP" id="MF_00303">
    <property type="entry name" value="Trigger_factor_Tig"/>
    <property type="match status" value="1"/>
</dbReference>
<dbReference type="InterPro" id="IPR046357">
    <property type="entry name" value="PPIase_dom_sf"/>
</dbReference>
<dbReference type="InterPro" id="IPR001179">
    <property type="entry name" value="PPIase_FKBP_dom"/>
</dbReference>
<dbReference type="InterPro" id="IPR005215">
    <property type="entry name" value="Trig_fac"/>
</dbReference>
<dbReference type="InterPro" id="IPR008880">
    <property type="entry name" value="Trigger_fac_C"/>
</dbReference>
<dbReference type="InterPro" id="IPR037041">
    <property type="entry name" value="Trigger_fac_C_sf"/>
</dbReference>
<dbReference type="InterPro" id="IPR008881">
    <property type="entry name" value="Trigger_fac_ribosome-bd_bac"/>
</dbReference>
<dbReference type="InterPro" id="IPR036611">
    <property type="entry name" value="Trigger_fac_ribosome-bd_sf"/>
</dbReference>
<dbReference type="InterPro" id="IPR027304">
    <property type="entry name" value="Trigger_fact/SurA_dom_sf"/>
</dbReference>
<dbReference type="NCBIfam" id="TIGR00115">
    <property type="entry name" value="tig"/>
    <property type="match status" value="1"/>
</dbReference>
<dbReference type="PANTHER" id="PTHR30560">
    <property type="entry name" value="TRIGGER FACTOR CHAPERONE AND PEPTIDYL-PROLYL CIS/TRANS ISOMERASE"/>
    <property type="match status" value="1"/>
</dbReference>
<dbReference type="PANTHER" id="PTHR30560:SF3">
    <property type="entry name" value="TRIGGER FACTOR-LIKE PROTEIN TIG, CHLOROPLASTIC"/>
    <property type="match status" value="1"/>
</dbReference>
<dbReference type="Pfam" id="PF00254">
    <property type="entry name" value="FKBP_C"/>
    <property type="match status" value="1"/>
</dbReference>
<dbReference type="Pfam" id="PF05698">
    <property type="entry name" value="Trigger_C"/>
    <property type="match status" value="1"/>
</dbReference>
<dbReference type="Pfam" id="PF05697">
    <property type="entry name" value="Trigger_N"/>
    <property type="match status" value="1"/>
</dbReference>
<dbReference type="PIRSF" id="PIRSF003095">
    <property type="entry name" value="Trigger_factor"/>
    <property type="match status" value="1"/>
</dbReference>
<dbReference type="SUPFAM" id="SSF54534">
    <property type="entry name" value="FKBP-like"/>
    <property type="match status" value="1"/>
</dbReference>
<dbReference type="SUPFAM" id="SSF109998">
    <property type="entry name" value="Triger factor/SurA peptide-binding domain-like"/>
    <property type="match status" value="1"/>
</dbReference>
<dbReference type="SUPFAM" id="SSF102735">
    <property type="entry name" value="Trigger factor ribosome-binding domain"/>
    <property type="match status" value="1"/>
</dbReference>
<dbReference type="PROSITE" id="PS50059">
    <property type="entry name" value="FKBP_PPIASE"/>
    <property type="match status" value="1"/>
</dbReference>
<reference key="1">
    <citation type="submission" date="2009-05" db="EMBL/GenBank/DDBJ databases">
        <title>Complete sequence of Tolumonas auensis DSM 9187.</title>
        <authorList>
            <consortium name="US DOE Joint Genome Institute"/>
            <person name="Lucas S."/>
            <person name="Copeland A."/>
            <person name="Lapidus A."/>
            <person name="Glavina del Rio T."/>
            <person name="Tice H."/>
            <person name="Bruce D."/>
            <person name="Goodwin L."/>
            <person name="Pitluck S."/>
            <person name="Chertkov O."/>
            <person name="Brettin T."/>
            <person name="Detter J.C."/>
            <person name="Han C."/>
            <person name="Larimer F."/>
            <person name="Land M."/>
            <person name="Hauser L."/>
            <person name="Kyrpides N."/>
            <person name="Mikhailova N."/>
            <person name="Spring S."/>
            <person name="Beller H."/>
        </authorList>
    </citation>
    <scope>NUCLEOTIDE SEQUENCE [LARGE SCALE GENOMIC DNA]</scope>
    <source>
        <strain>DSM 9187 / NBRC 110442 / TA 4</strain>
    </source>
</reference>
<evidence type="ECO:0000255" key="1">
    <source>
        <dbReference type="HAMAP-Rule" id="MF_00303"/>
    </source>
</evidence>
<organism>
    <name type="scientific">Tolumonas auensis (strain DSM 9187 / NBRC 110442 / TA 4)</name>
    <dbReference type="NCBI Taxonomy" id="595494"/>
    <lineage>
        <taxon>Bacteria</taxon>
        <taxon>Pseudomonadati</taxon>
        <taxon>Pseudomonadota</taxon>
        <taxon>Gammaproteobacteria</taxon>
        <taxon>Aeromonadales</taxon>
        <taxon>Aeromonadaceae</taxon>
        <taxon>Tolumonas</taxon>
    </lineage>
</organism>